<protein>
    <recommendedName>
        <fullName evidence="1">N-acetyl-gamma-glutamyl-phosphate reductase</fullName>
        <shortName evidence="1">AGPR</shortName>
        <ecNumber evidence="1">1.2.1.38</ecNumber>
    </recommendedName>
    <alternativeName>
        <fullName evidence="1">N-acetyl-glutamate semialdehyde dehydrogenase</fullName>
        <shortName evidence="1">NAGSA dehydrogenase</shortName>
    </alternativeName>
</protein>
<evidence type="ECO:0000255" key="1">
    <source>
        <dbReference type="HAMAP-Rule" id="MF_00150"/>
    </source>
</evidence>
<accession>B3DSZ3</accession>
<sequence length="364" mass="38047">MAKYTVAVAGATGYAGGEALRILAAHPDFDITCVAGHSSVGESMAKHMPHIPQLANLVVEDTTPEVLNGHDVIILALPHGASGKLASQLDPNAVVVDLGADHRLEEQAAWDEFYGGDFYEHWTYGMPELITGKAADGSYTRQRAALPGTKRIAGPGCNVTATTLALQPGIAEGLVESQDIVADLVVGYSGAGKNLKRTNLLAAEALQSALPYSVGGKHRHIPEILQNFAHAAGKSAAEASEFTLGFTPILAPMSRGILATVSARMTDKAKTLSDEEIRAVWSKAYEGQDFMVLLPEGTLPATGNIIGSNAAHLQVVTDRKAGRIYAFAAIDNLNRGTAGQAVQSLNIALGLPEDAGLTKIGVAP</sequence>
<dbReference type="EC" id="1.2.1.38" evidence="1"/>
<dbReference type="EMBL" id="CP000605">
    <property type="protein sequence ID" value="ACD98262.1"/>
    <property type="molecule type" value="Genomic_DNA"/>
</dbReference>
<dbReference type="RefSeq" id="WP_012471942.1">
    <property type="nucleotide sequence ID" value="NZ_AABM02000002.1"/>
</dbReference>
<dbReference type="SMR" id="B3DSZ3"/>
<dbReference type="GeneID" id="69577795"/>
<dbReference type="KEGG" id="blj:BLD_0816"/>
<dbReference type="HOGENOM" id="CLU_006384_0_0_11"/>
<dbReference type="UniPathway" id="UPA00068">
    <property type="reaction ID" value="UER00108"/>
</dbReference>
<dbReference type="Proteomes" id="UP000002419">
    <property type="component" value="Chromosome"/>
</dbReference>
<dbReference type="GO" id="GO:0005737">
    <property type="term" value="C:cytoplasm"/>
    <property type="evidence" value="ECO:0007669"/>
    <property type="project" value="UniProtKB-SubCell"/>
</dbReference>
<dbReference type="GO" id="GO:0003942">
    <property type="term" value="F:N-acetyl-gamma-glutamyl-phosphate reductase activity"/>
    <property type="evidence" value="ECO:0007669"/>
    <property type="project" value="UniProtKB-UniRule"/>
</dbReference>
<dbReference type="GO" id="GO:0051287">
    <property type="term" value="F:NAD binding"/>
    <property type="evidence" value="ECO:0007669"/>
    <property type="project" value="InterPro"/>
</dbReference>
<dbReference type="GO" id="GO:0070401">
    <property type="term" value="F:NADP+ binding"/>
    <property type="evidence" value="ECO:0007669"/>
    <property type="project" value="InterPro"/>
</dbReference>
<dbReference type="GO" id="GO:0006526">
    <property type="term" value="P:L-arginine biosynthetic process"/>
    <property type="evidence" value="ECO:0007669"/>
    <property type="project" value="UniProtKB-UniRule"/>
</dbReference>
<dbReference type="CDD" id="cd24148">
    <property type="entry name" value="AGPR_1_actinobacAGPR_like"/>
    <property type="match status" value="1"/>
</dbReference>
<dbReference type="CDD" id="cd23934">
    <property type="entry name" value="AGPR_1_C"/>
    <property type="match status" value="1"/>
</dbReference>
<dbReference type="Gene3D" id="3.30.360.10">
    <property type="entry name" value="Dihydrodipicolinate Reductase, domain 2"/>
    <property type="match status" value="1"/>
</dbReference>
<dbReference type="Gene3D" id="3.40.50.720">
    <property type="entry name" value="NAD(P)-binding Rossmann-like Domain"/>
    <property type="match status" value="1"/>
</dbReference>
<dbReference type="HAMAP" id="MF_00150">
    <property type="entry name" value="ArgC_type1"/>
    <property type="match status" value="1"/>
</dbReference>
<dbReference type="InterPro" id="IPR023013">
    <property type="entry name" value="AGPR_AS"/>
</dbReference>
<dbReference type="InterPro" id="IPR000706">
    <property type="entry name" value="AGPR_type-1"/>
</dbReference>
<dbReference type="InterPro" id="IPR036291">
    <property type="entry name" value="NAD(P)-bd_dom_sf"/>
</dbReference>
<dbReference type="InterPro" id="IPR050085">
    <property type="entry name" value="NAGSA_dehydrogenase"/>
</dbReference>
<dbReference type="InterPro" id="IPR000534">
    <property type="entry name" value="Semialdehyde_DH_NAD-bd"/>
</dbReference>
<dbReference type="NCBIfam" id="TIGR01850">
    <property type="entry name" value="argC"/>
    <property type="match status" value="1"/>
</dbReference>
<dbReference type="PANTHER" id="PTHR32338:SF10">
    <property type="entry name" value="N-ACETYL-GAMMA-GLUTAMYL-PHOSPHATE REDUCTASE, CHLOROPLASTIC-RELATED"/>
    <property type="match status" value="1"/>
</dbReference>
<dbReference type="PANTHER" id="PTHR32338">
    <property type="entry name" value="N-ACETYL-GAMMA-GLUTAMYL-PHOSPHATE REDUCTASE, CHLOROPLASTIC-RELATED-RELATED"/>
    <property type="match status" value="1"/>
</dbReference>
<dbReference type="Pfam" id="PF01118">
    <property type="entry name" value="Semialdhyde_dh"/>
    <property type="match status" value="1"/>
</dbReference>
<dbReference type="Pfam" id="PF22698">
    <property type="entry name" value="Semialdhyde_dhC_1"/>
    <property type="match status" value="1"/>
</dbReference>
<dbReference type="SMART" id="SM00859">
    <property type="entry name" value="Semialdhyde_dh"/>
    <property type="match status" value="1"/>
</dbReference>
<dbReference type="SUPFAM" id="SSF55347">
    <property type="entry name" value="Glyceraldehyde-3-phosphate dehydrogenase-like, C-terminal domain"/>
    <property type="match status" value="1"/>
</dbReference>
<dbReference type="SUPFAM" id="SSF51735">
    <property type="entry name" value="NAD(P)-binding Rossmann-fold domains"/>
    <property type="match status" value="1"/>
</dbReference>
<dbReference type="PROSITE" id="PS01224">
    <property type="entry name" value="ARGC"/>
    <property type="match status" value="1"/>
</dbReference>
<keyword id="KW-0028">Amino-acid biosynthesis</keyword>
<keyword id="KW-0055">Arginine biosynthesis</keyword>
<keyword id="KW-0963">Cytoplasm</keyword>
<keyword id="KW-0521">NADP</keyword>
<keyword id="KW-0560">Oxidoreductase</keyword>
<reference key="1">
    <citation type="journal article" date="2008" name="BMC Genomics">
        <title>Comparative genomic analysis of the gut bacterium Bifidobacterium longum reveals loci susceptible to deletion during pure culture growth.</title>
        <authorList>
            <person name="Lee J.H."/>
            <person name="Karamychev V.N."/>
            <person name="Kozyavkin S.A."/>
            <person name="Mills D."/>
            <person name="Pavlov A.R."/>
            <person name="Pavlova N.V."/>
            <person name="Polouchine N.N."/>
            <person name="Richardson P.M."/>
            <person name="Shakhova V.V."/>
            <person name="Slesarev A.I."/>
            <person name="Weimer B."/>
            <person name="O'Sullivan D.J."/>
        </authorList>
    </citation>
    <scope>NUCLEOTIDE SEQUENCE [LARGE SCALE GENOMIC DNA]</scope>
    <source>
        <strain>DJO10A</strain>
    </source>
</reference>
<comment type="function">
    <text evidence="1">Catalyzes the NADPH-dependent reduction of N-acetyl-5-glutamyl phosphate to yield N-acetyl-L-glutamate 5-semialdehyde.</text>
</comment>
<comment type="catalytic activity">
    <reaction evidence="1">
        <text>N-acetyl-L-glutamate 5-semialdehyde + phosphate + NADP(+) = N-acetyl-L-glutamyl 5-phosphate + NADPH + H(+)</text>
        <dbReference type="Rhea" id="RHEA:21588"/>
        <dbReference type="ChEBI" id="CHEBI:15378"/>
        <dbReference type="ChEBI" id="CHEBI:29123"/>
        <dbReference type="ChEBI" id="CHEBI:43474"/>
        <dbReference type="ChEBI" id="CHEBI:57783"/>
        <dbReference type="ChEBI" id="CHEBI:57936"/>
        <dbReference type="ChEBI" id="CHEBI:58349"/>
        <dbReference type="EC" id="1.2.1.38"/>
    </reaction>
</comment>
<comment type="pathway">
    <text evidence="1">Amino-acid biosynthesis; L-arginine biosynthesis; N(2)-acetyl-L-ornithine from L-glutamate: step 3/4.</text>
</comment>
<comment type="subcellular location">
    <subcellularLocation>
        <location evidence="1">Cytoplasm</location>
    </subcellularLocation>
</comment>
<comment type="similarity">
    <text evidence="1">Belongs to the NAGSA dehydrogenase family. Type 1 subfamily.</text>
</comment>
<feature type="chain" id="PRO_1000096715" description="N-acetyl-gamma-glutamyl-phosphate reductase">
    <location>
        <begin position="1"/>
        <end position="364"/>
    </location>
</feature>
<feature type="active site" evidence="1">
    <location>
        <position position="157"/>
    </location>
</feature>
<proteinExistence type="inferred from homology"/>
<organism>
    <name type="scientific">Bifidobacterium longum (strain DJO10A)</name>
    <dbReference type="NCBI Taxonomy" id="205913"/>
    <lineage>
        <taxon>Bacteria</taxon>
        <taxon>Bacillati</taxon>
        <taxon>Actinomycetota</taxon>
        <taxon>Actinomycetes</taxon>
        <taxon>Bifidobacteriales</taxon>
        <taxon>Bifidobacteriaceae</taxon>
        <taxon>Bifidobacterium</taxon>
    </lineage>
</organism>
<gene>
    <name evidence="1" type="primary">argC</name>
    <name type="ordered locus">BLD_0816</name>
</gene>
<name>ARGC_BIFLD</name>